<dbReference type="EMBL" id="AC004077">
    <property type="protein sequence ID" value="AAC26686.1"/>
    <property type="status" value="ALT_SEQ"/>
    <property type="molecule type" value="Genomic_DNA"/>
</dbReference>
<dbReference type="EMBL" id="CP002685">
    <property type="protein sequence ID" value="AEC09002.1"/>
    <property type="molecule type" value="Genomic_DNA"/>
</dbReference>
<dbReference type="EMBL" id="AK117813">
    <property type="protein sequence ID" value="BAC42455.2"/>
    <property type="molecule type" value="mRNA"/>
</dbReference>
<dbReference type="PIR" id="B84759">
    <property type="entry name" value="B84759"/>
</dbReference>
<dbReference type="RefSeq" id="NP_181011.2">
    <property type="nucleotide sequence ID" value="NM_129018.4"/>
</dbReference>
<dbReference type="SMR" id="F4IHY7"/>
<dbReference type="FunCoup" id="F4IHY7">
    <property type="interactions" value="783"/>
</dbReference>
<dbReference type="IntAct" id="F4IHY7">
    <property type="interactions" value="1"/>
</dbReference>
<dbReference type="MINT" id="F4IHY7"/>
<dbReference type="STRING" id="3702.F4IHY7"/>
<dbReference type="PaxDb" id="3702-AT2G34640.1"/>
<dbReference type="ProteomicsDB" id="248842"/>
<dbReference type="EnsemblPlants" id="AT2G34640.1">
    <property type="protein sequence ID" value="AT2G34640.1"/>
    <property type="gene ID" value="AT2G34640"/>
</dbReference>
<dbReference type="GeneID" id="818029"/>
<dbReference type="Gramene" id="AT2G34640.1">
    <property type="protein sequence ID" value="AT2G34640.1"/>
    <property type="gene ID" value="AT2G34640"/>
</dbReference>
<dbReference type="KEGG" id="ath:AT2G34640"/>
<dbReference type="Araport" id="AT2G34640"/>
<dbReference type="TAIR" id="AT2G34640">
    <property type="gene designation" value="PTAC12"/>
</dbReference>
<dbReference type="eggNOG" id="ENOG502QS8P">
    <property type="taxonomic scope" value="Eukaryota"/>
</dbReference>
<dbReference type="HOGENOM" id="CLU_037383_0_0_1"/>
<dbReference type="InParanoid" id="F4IHY7"/>
<dbReference type="OMA" id="GKEYWPE"/>
<dbReference type="OrthoDB" id="2019670at2759"/>
<dbReference type="PRO" id="PR:F4IHY7"/>
<dbReference type="Proteomes" id="UP000006548">
    <property type="component" value="Chromosome 2"/>
</dbReference>
<dbReference type="ExpressionAtlas" id="F4IHY7">
    <property type="expression patterns" value="baseline and differential"/>
</dbReference>
<dbReference type="GO" id="GO:0009507">
    <property type="term" value="C:chloroplast"/>
    <property type="evidence" value="ECO:0000314"/>
    <property type="project" value="UniProtKB"/>
</dbReference>
<dbReference type="GO" id="GO:0042644">
    <property type="term" value="C:chloroplast nucleoid"/>
    <property type="evidence" value="ECO:0007005"/>
    <property type="project" value="TAIR"/>
</dbReference>
<dbReference type="GO" id="GO:0005634">
    <property type="term" value="C:nucleus"/>
    <property type="evidence" value="ECO:0000314"/>
    <property type="project" value="UniProtKB"/>
</dbReference>
<dbReference type="GO" id="GO:0000427">
    <property type="term" value="C:plastid-encoded plastid RNA polymerase complex"/>
    <property type="evidence" value="ECO:0000314"/>
    <property type="project" value="UniProtKB"/>
</dbReference>
<dbReference type="GO" id="GO:0140537">
    <property type="term" value="F:transcription regulator activator activity"/>
    <property type="evidence" value="ECO:0000314"/>
    <property type="project" value="UniProtKB"/>
</dbReference>
<dbReference type="GO" id="GO:0042793">
    <property type="term" value="P:plastid transcription"/>
    <property type="evidence" value="ECO:0000315"/>
    <property type="project" value="TAIR"/>
</dbReference>
<dbReference type="GO" id="GO:0045893">
    <property type="term" value="P:positive regulation of DNA-templated transcription"/>
    <property type="evidence" value="ECO:0000315"/>
    <property type="project" value="UniProtKB"/>
</dbReference>
<dbReference type="GO" id="GO:0090228">
    <property type="term" value="P:positive regulation of red or far-red light signaling pathway"/>
    <property type="evidence" value="ECO:0000315"/>
    <property type="project" value="UniProtKB"/>
</dbReference>
<dbReference type="GO" id="GO:0140922">
    <property type="term" value="P:positive regulation of thermomorphogenesis"/>
    <property type="evidence" value="ECO:0000315"/>
    <property type="project" value="UniProtKB"/>
</dbReference>
<dbReference type="GO" id="GO:0030163">
    <property type="term" value="P:protein catabolic process"/>
    <property type="evidence" value="ECO:0000315"/>
    <property type="project" value="UniProtKB"/>
</dbReference>
<dbReference type="GO" id="GO:0009585">
    <property type="term" value="P:red, far-red light phototransduction"/>
    <property type="evidence" value="ECO:0007669"/>
    <property type="project" value="UniProtKB-KW"/>
</dbReference>
<dbReference type="GO" id="GO:1905421">
    <property type="term" value="P:regulation of plant organ morphogenesis"/>
    <property type="evidence" value="ECO:0000315"/>
    <property type="project" value="UniProtKB"/>
</dbReference>
<dbReference type="GO" id="GO:0006357">
    <property type="term" value="P:regulation of transcription by RNA polymerase II"/>
    <property type="evidence" value="ECO:0000315"/>
    <property type="project" value="UniProtKB"/>
</dbReference>
<dbReference type="GO" id="GO:0009637">
    <property type="term" value="P:response to blue light"/>
    <property type="evidence" value="ECO:0000270"/>
    <property type="project" value="UniProtKB"/>
</dbReference>
<dbReference type="GO" id="GO:0009735">
    <property type="term" value="P:response to cytokinin"/>
    <property type="evidence" value="ECO:0000270"/>
    <property type="project" value="UniProtKB"/>
</dbReference>
<dbReference type="GO" id="GO:0010218">
    <property type="term" value="P:response to far red light"/>
    <property type="evidence" value="ECO:0000315"/>
    <property type="project" value="UniProtKB"/>
</dbReference>
<dbReference type="GO" id="GO:0009416">
    <property type="term" value="P:response to light stimulus"/>
    <property type="evidence" value="ECO:0000270"/>
    <property type="project" value="UniProtKB"/>
</dbReference>
<dbReference type="GO" id="GO:0010114">
    <property type="term" value="P:response to red light"/>
    <property type="evidence" value="ECO:0000315"/>
    <property type="project" value="UniProtKB"/>
</dbReference>
<dbReference type="GO" id="GO:0009266">
    <property type="term" value="P:response to temperature stimulus"/>
    <property type="evidence" value="ECO:0000315"/>
    <property type="project" value="UniProtKB"/>
</dbReference>
<dbReference type="GO" id="GO:0009411">
    <property type="term" value="P:response to UV"/>
    <property type="evidence" value="ECO:0000315"/>
    <property type="project" value="UniProtKB"/>
</dbReference>
<dbReference type="GO" id="GO:0009650">
    <property type="term" value="P:UV protection"/>
    <property type="evidence" value="ECO:0000315"/>
    <property type="project" value="UniProtKB"/>
</dbReference>
<dbReference type="InterPro" id="IPR034581">
    <property type="entry name" value="PTAC12"/>
</dbReference>
<dbReference type="PANTHER" id="PTHR35720">
    <property type="entry name" value="PROTEIN PLASTID TRANSCRIPTIONALLY ACTIVE 12, CHLOROPLASTIC"/>
    <property type="match status" value="1"/>
</dbReference>
<dbReference type="PANTHER" id="PTHR35720:SF1">
    <property type="entry name" value="PROTEIN PLASTID TRANSCRIPTIONALLY ACTIVE 12, CHLOROPLASTIC"/>
    <property type="match status" value="1"/>
</dbReference>
<feature type="transit peptide" description="Chloroplast" evidence="1">
    <location>
        <begin position="1"/>
        <end position="30"/>
    </location>
</feature>
<feature type="chain" id="PRO_0000433435" description="Protein PLASTID TRANSCRIPTIONALLY ACTIVE 12, chloroplastic">
    <location>
        <begin position="31"/>
        <end position="527"/>
    </location>
</feature>
<feature type="region of interest" description="PHYA-interacting region 1 (PIR1)" evidence="8">
    <location>
        <begin position="1"/>
        <end position="115"/>
    </location>
</feature>
<feature type="region of interest" description="Disordered" evidence="3">
    <location>
        <begin position="89"/>
        <end position="188"/>
    </location>
</feature>
<feature type="region of interest" description="PHYA-interacting region 2 (PIR2)" evidence="8">
    <location>
        <begin position="252"/>
        <end position="352"/>
    </location>
</feature>
<feature type="region of interest" description="Disordered" evidence="3">
    <location>
        <begin position="458"/>
        <end position="527"/>
    </location>
</feature>
<feature type="short sequence motif" description="Nuclear localization signal 1" evidence="2">
    <location>
        <begin position="204"/>
        <end position="211"/>
    </location>
</feature>
<feature type="short sequence motif" description="Nuclear localization signal 2" evidence="2">
    <location>
        <begin position="235"/>
        <end position="242"/>
    </location>
</feature>
<feature type="short sequence motif" description="Required and sufficient for transcriptional transactivation activity and to trigger PIF proteins degradation" evidence="10">
    <location>
        <begin position="512"/>
        <end position="520"/>
    </location>
</feature>
<feature type="compositionally biased region" description="Acidic residues" evidence="3">
    <location>
        <begin position="163"/>
        <end position="181"/>
    </location>
</feature>
<feature type="compositionally biased region" description="Acidic residues" evidence="3">
    <location>
        <begin position="458"/>
        <end position="471"/>
    </location>
</feature>
<feature type="compositionally biased region" description="Basic and acidic residues" evidence="3">
    <location>
        <begin position="485"/>
        <end position="504"/>
    </location>
</feature>
<feature type="compositionally biased region" description="Acidic residues" evidence="3">
    <location>
        <begin position="506"/>
        <end position="527"/>
    </location>
</feature>
<feature type="mutagenesis site" description="Slightly weaker interaction with PHYA and PHYB and impaired light-mediated accumulation." evidence="8">
    <original>R</original>
    <variation>K</variation>
    <location>
        <position position="293"/>
    </location>
</feature>
<feature type="mutagenesis site" description="Reduced transcriptional transactivation activity of PIFs target genes (class B) and hyposensitivity to red and far-red light due to impaired phyA and phyB signaling. Altered chloroplast biogenesis. Normal interaction with PIF proteins (e.g. PIF1 and PIF3), but defect in their degradation upon red light stimuli. Impaired ability to induce the accumulation of thermoresponsive genes and of PIF4." evidence="10 12">
    <original>D</original>
    <variation>N</variation>
    <location>
        <position position="516"/>
    </location>
</feature>
<feature type="sequence conflict" description="In Ref. 3; BAC42455." evidence="22" ref="3">
    <original>D</original>
    <variation>N</variation>
    <location>
        <position position="375"/>
    </location>
</feature>
<gene>
    <name evidence="18" type="primary">PTAC12</name>
    <name evidence="19 21" type="synonym">HMR</name>
    <name evidence="20" type="synonym">PAP5</name>
    <name evidence="18" type="synonym">TAC12</name>
    <name evidence="23" type="ordered locus">At2g34640</name>
    <name evidence="24" type="ORF">T31E10.2</name>
</gene>
<sequence length="527" mass="60895">MASISTTTWLYRGQVCTDSGKSSNCIVQRRVKCGFPLKTLHAGITSRDRSLRHCIKCKKEDGDGDVSEGSKKSEEGFEYVTVERHPYHSYMDSTSGKLEPASGARASIPGEDYWPEGTSSRVRAARAPQPAGESSSFPSYGKNPGSRRKKNRKATEENVTVETNDEVSDSEDSSEEEENDSSDGFVTYKNEFEREEEETGFELDKKLGRPHPFIDPTKKKQIEKTLTSDESWWNWRKPEKEQWSRWQRRRPDVETVFLKAMAETGQVKLYGEEPTLTETSLYRARRHLFKEERLQAERERLAKEGPMAFYSEWVKAWKRDTSREAVQKHFEETGEDENTQLIEMFSHQTDREYRIMMGTDIRIKRDPLAMRMREDQIKQIWGGDPVYPTINYIQDPNAVMDFRGPDFHEPTPNMLSYLKENGKVISREMHEALLTKEKTEQLEVPDMDDAMAQAVDIGENDDDEDDADVEKDDEKVPRNWSVLKETPELRTAKPKPKKEGRMSLDEAVDDAENLTDFLMDFEEETDP</sequence>
<name>PTA12_ARATH</name>
<accession>F4IHY7</accession>
<accession>O64683</accession>
<accession>Q8GY76</accession>
<protein>
    <recommendedName>
        <fullName evidence="18">Protein PLASTID TRANSCRIPTIONALLY ACTIVE 12, chloroplastic</fullName>
        <shortName evidence="18">pTAC12</shortName>
    </recommendedName>
    <alternativeName>
        <fullName evidence="20">Plastid-encoded RNA polymerase-associated protein 5</fullName>
        <shortName evidence="20">PEP-associated protein 5</shortName>
    </alternativeName>
    <alternativeName>
        <fullName evidence="19 21">Protein HEMERA</fullName>
    </alternativeName>
</protein>
<keyword id="KW-0150">Chloroplast</keyword>
<keyword id="KW-0539">Nucleus</keyword>
<keyword id="KW-0607">Phytochrome signaling pathway</keyword>
<keyword id="KW-0934">Plastid</keyword>
<keyword id="KW-1185">Reference proteome</keyword>
<keyword id="KW-0346">Stress response</keyword>
<keyword id="KW-0804">Transcription</keyword>
<keyword id="KW-0805">Transcription regulation</keyword>
<keyword id="KW-0809">Transit peptide</keyword>
<reference key="1">
    <citation type="journal article" date="1999" name="Nature">
        <title>Sequence and analysis of chromosome 2 of the plant Arabidopsis thaliana.</title>
        <authorList>
            <person name="Lin X."/>
            <person name="Kaul S."/>
            <person name="Rounsley S.D."/>
            <person name="Shea T.P."/>
            <person name="Benito M.-I."/>
            <person name="Town C.D."/>
            <person name="Fujii C.Y."/>
            <person name="Mason T.M."/>
            <person name="Bowman C.L."/>
            <person name="Barnstead M.E."/>
            <person name="Feldblyum T.V."/>
            <person name="Buell C.R."/>
            <person name="Ketchum K.A."/>
            <person name="Lee J.J."/>
            <person name="Ronning C.M."/>
            <person name="Koo H.L."/>
            <person name="Moffat K.S."/>
            <person name="Cronin L.A."/>
            <person name="Shen M."/>
            <person name="Pai G."/>
            <person name="Van Aken S."/>
            <person name="Umayam L."/>
            <person name="Tallon L.J."/>
            <person name="Gill J.E."/>
            <person name="Adams M.D."/>
            <person name="Carrera A.J."/>
            <person name="Creasy T.H."/>
            <person name="Goodman H.M."/>
            <person name="Somerville C.R."/>
            <person name="Copenhaver G.P."/>
            <person name="Preuss D."/>
            <person name="Nierman W.C."/>
            <person name="White O."/>
            <person name="Eisen J.A."/>
            <person name="Salzberg S.L."/>
            <person name="Fraser C.M."/>
            <person name="Venter J.C."/>
        </authorList>
    </citation>
    <scope>NUCLEOTIDE SEQUENCE [LARGE SCALE GENOMIC DNA]</scope>
    <source>
        <strain>cv. Columbia</strain>
    </source>
</reference>
<reference key="2">
    <citation type="journal article" date="2017" name="Plant J.">
        <title>Araport11: a complete reannotation of the Arabidopsis thaliana reference genome.</title>
        <authorList>
            <person name="Cheng C.Y."/>
            <person name="Krishnakumar V."/>
            <person name="Chan A.P."/>
            <person name="Thibaud-Nissen F."/>
            <person name="Schobel S."/>
            <person name="Town C.D."/>
        </authorList>
    </citation>
    <scope>GENOME REANNOTATION</scope>
    <source>
        <strain>cv. Columbia</strain>
    </source>
</reference>
<reference key="3">
    <citation type="journal article" date="2002" name="Science">
        <title>Functional annotation of a full-length Arabidopsis cDNA collection.</title>
        <authorList>
            <person name="Seki M."/>
            <person name="Narusaka M."/>
            <person name="Kamiya A."/>
            <person name="Ishida J."/>
            <person name="Satou M."/>
            <person name="Sakurai T."/>
            <person name="Nakajima M."/>
            <person name="Enju A."/>
            <person name="Akiyama K."/>
            <person name="Oono Y."/>
            <person name="Muramatsu M."/>
            <person name="Hayashizaki Y."/>
            <person name="Kawai J."/>
            <person name="Carninci P."/>
            <person name="Itoh M."/>
            <person name="Ishii Y."/>
            <person name="Arakawa T."/>
            <person name="Shibata K."/>
            <person name="Shinagawa A."/>
            <person name="Shinozaki K."/>
        </authorList>
    </citation>
    <scope>NUCLEOTIDE SEQUENCE [LARGE SCALE MRNA]</scope>
    <source>
        <strain>cv. Columbia</strain>
    </source>
</reference>
<reference key="4">
    <citation type="journal article" date="2006" name="Plant Cell">
        <title>pTAC2, -6, and -12 are components of the transcriptionally active plastid chromosome that are required for plastid gene expression.</title>
        <authorList>
            <person name="Pfalz J."/>
            <person name="Liere K."/>
            <person name="Kandlbinder A."/>
            <person name="Dietz K.-J."/>
            <person name="Oelmueller R."/>
        </authorList>
    </citation>
    <scope>FUNCTION</scope>
    <scope>DISRUPTION PHENOTYPE</scope>
    <scope>SUBCELLULAR LOCATION</scope>
    <scope>TISSUE SPECIFICITY</scope>
    <scope>NOMENCLATURE</scope>
</reference>
<reference key="5">
    <citation type="journal article" date="2010" name="Cell">
        <title>Arabidopsis HEMERA/pTAC12 initiates photomorphogenesis by phytochromes.</title>
        <authorList>
            <person name="Chen M."/>
            <person name="Galvao R.M."/>
            <person name="Li M."/>
            <person name="Burger B."/>
            <person name="Bugea J."/>
            <person name="Bolado J."/>
            <person name="Chory J."/>
        </authorList>
    </citation>
    <scope>FUNCTION</scope>
    <scope>DISRUPTION PHENOTYPE</scope>
    <scope>TISSUE SPECIFICITY</scope>
    <scope>DEVELOPMENTAL STAGE</scope>
    <scope>INDUCTION BY LIGHT</scope>
    <scope>SUBCELLULAR LOCATION</scope>
    <source>
        <strain>cv. Columbia</strain>
    </source>
</reference>
<reference key="6">
    <citation type="journal article" date="2011" name="Plant Physiol.">
        <title>Identification of essential subunits in the plastid-encoded RNA polymerase complex reveals building blocks for proper plastid development.</title>
        <authorList>
            <person name="Steiner S."/>
            <person name="Schroeter Y."/>
            <person name="Pfalz J."/>
            <person name="Pfannschmidt T."/>
        </authorList>
    </citation>
    <scope>IDENTIFICATION BY MASS SPECTROMETRY</scope>
    <scope>SUBUNIT</scope>
</reference>
<reference key="7">
    <citation type="journal article" date="2011" name="Plant Physiol.">
        <title>A functional component of the transcriptionally active chromosome complex, Arabidopsis pTAC14, interacts with pTAC12/HEMERA and regulates plastid gene expression.</title>
        <authorList>
            <person name="Gao Z.-P."/>
            <person name="Yu Q.-B."/>
            <person name="Zhao T.-T."/>
            <person name="Ma Q."/>
            <person name="Chen G.-X."/>
            <person name="Yang Z.-N."/>
        </authorList>
    </citation>
    <scope>INTERACTION WITH PTAC14</scope>
    <source>
        <strain>cv. Columbia</strain>
    </source>
</reference>
<reference key="8">
    <citation type="journal article" date="2012" name="Genes Dev.">
        <title>Photoactivated phytochromes interact with HEMERA and promote its accumulation to establish photomorphogenesis in Arabidopsis.</title>
        <authorList>
            <person name="Galvao R.M."/>
            <person name="Li M."/>
            <person name="Kothadia S.M."/>
            <person name="Haskel J.D."/>
            <person name="Decker P.V."/>
            <person name="Van Buskirk E.K."/>
            <person name="Chen M."/>
        </authorList>
    </citation>
    <scope>FUNCTION</scope>
    <scope>MUTAGENESIS OF ARG-293</scope>
    <scope>INTERACTION WITH PHYA AND PHYB</scope>
    <scope>INDUCTION BY LIGHT</scope>
    <scope>SUBCELLULAR LOCATION</scope>
    <source>
        <strain>cv. Columbia</strain>
    </source>
</reference>
<reference key="9">
    <citation type="journal article" date="2012" name="Plant Signal. Behav.">
        <title>Regulatory role of Arabidopsis pTAC14 in chloroplast development and plastid gene expression.</title>
        <authorList>
            <person name="Gao Z.-P."/>
            <person name="Chen G.-X."/>
            <person name="Yang Z.-N."/>
        </authorList>
    </citation>
    <scope>REVIEW</scope>
</reference>
<reference key="10">
    <citation type="journal article" date="2013" name="Physiol. Plantarum">
        <title>TAC7, an essential component of the plastid transcriptionally active chromosome complex, interacts with FLN1, TAC10, TAC12 and TAC14 to regulate chloroplast gene expression in Arabidopsis thaliana.</title>
        <authorList>
            <person name="Yu Q.-B."/>
            <person name="Lu Y."/>
            <person name="Ma Q."/>
            <person name="Zhao T.-T."/>
            <person name="Huang C."/>
            <person name="Zhao H.-F."/>
            <person name="Zhang X.-L."/>
            <person name="Lv R.-H."/>
            <person name="Yang Z.-N."/>
        </authorList>
    </citation>
    <scope>INTERACTION WITH PTAC7</scope>
</reference>
<reference key="11">
    <citation type="journal article" date="2015" name="Plant Cell">
        <title>HEMERA couples the proteolysis and transcriptional activity of PHYTOCHROME INTERACTING FACTORs in Arabidopsis photomorphogenesis.</title>
        <authorList>
            <person name="Qiu Y."/>
            <person name="Li M."/>
            <person name="Pasoreck E.K."/>
            <person name="Long L."/>
            <person name="Shi Y."/>
            <person name="Galvao R.M."/>
            <person name="Chou C.L."/>
            <person name="Wang H."/>
            <person name="Sun A.Y."/>
            <person name="Zhang Y.C."/>
            <person name="Jiang A."/>
            <person name="Chen M."/>
        </authorList>
    </citation>
    <scope>FUNCTION</scope>
    <scope>DISRUPTION PHENOTYPE</scope>
    <scope>MUTAGENESIS OF ASP-516</scope>
    <scope>INTERACTION WITH PIF1; PIF3; PIF4; PIF5; PIF6; BHLH72/PIF7; UNE10/PIF8 AND PIL1</scope>
    <source>
        <strain>cv. Columbia</strain>
    </source>
</reference>
<reference key="12">
    <citation type="journal article" date="2017" name="Genes (Basel)">
        <title>RAD4 and RAD23/HMR contribute to Arabidopsis UV tolerance.</title>
        <authorList>
            <person name="Lahari T."/>
            <person name="Lazaro J."/>
            <person name="Schroeder D.F."/>
        </authorList>
    </citation>
    <scope>FUNCTION</scope>
    <scope>DISRUPTION PHENOTYPE</scope>
    <scope>INTERACTION WITH RAD4</scope>
    <source>
        <strain>cv. Columbia</strain>
    </source>
</reference>
<reference key="13">
    <citation type="journal article" date="2019" name="Nat. Commun.">
        <title>Daytime temperature is sensed by phytochrome B in Arabidopsis through a transcriptional activator HEMERA.</title>
        <authorList>
            <person name="Qiu Y."/>
            <person name="Li M."/>
            <person name="Kim R.J.-A."/>
            <person name="Moore C.M."/>
            <person name="Chen M."/>
        </authorList>
    </citation>
    <scope>FUNCTION</scope>
    <scope>DISRUPTION PHENOTYPE</scope>
    <scope>MUTAGENESIS OF ASP-516</scope>
    <scope>INTERACTION WITH PIF4</scope>
    <source>
        <strain>cv. Columbia</strain>
    </source>
</reference>
<reference key="14">
    <citation type="journal article" date="2020" name="Biomolecules">
        <title>Cytokinin-regulated expression of Arabidopsis thaliana PAP genes and its implication for the expression of chloroplast-encoded genes.</title>
        <authorList>
            <person name="Andreeva A.A."/>
            <person name="Vankova R."/>
            <person name="Bychkov I.A."/>
            <person name="Kudryakova N.V."/>
            <person name="Danilova M.N."/>
            <person name="Lacek J."/>
            <person name="Pojidaeva E.S."/>
            <person name="Kusnetsov V.V."/>
        </authorList>
    </citation>
    <scope>INDUCTION BY CYTOKININ</scope>
    <source>
        <strain>cv. Columbia</strain>
    </source>
</reference>
<reference key="15">
    <citation type="journal article" date="2020" name="EMBO J.">
        <title>Nucleo-plastidic PAP8/pTAC6 couples chloroplast formation with photomorphogenesis.</title>
        <authorList>
            <person name="Liebers M."/>
            <person name="Gillet F.-X."/>
            <person name="Israel A."/>
            <person name="Pounot K."/>
            <person name="Chambon L."/>
            <person name="Chieb M."/>
            <person name="Chevalier F."/>
            <person name="Ruedas R."/>
            <person name="Favier A."/>
            <person name="Gans P."/>
            <person name="Boeri Erba E."/>
            <person name="Cobessi D."/>
            <person name="Pfannschmidt T."/>
            <person name="Blanvillain R."/>
        </authorList>
    </citation>
    <scope>INTERACTION WITH PTAC6/PAP8</scope>
    <source>
        <strain>cv. Columbia</strain>
    </source>
</reference>
<reference key="16">
    <citation type="journal article" date="2020" name="Front. Plant Sci.">
        <title>Arabidopsis Seedling Lethal 1 interacting with plastid-encoded RNA polymerase complex proteins is essential for chloroplast development.</title>
        <authorList>
            <person name="Jiang D."/>
            <person name="Tang R."/>
            <person name="Shi Y."/>
            <person name="Ke X."/>
            <person name="Wang Y."/>
            <person name="Che Y."/>
            <person name="Luan S."/>
            <person name="Hou X."/>
        </authorList>
    </citation>
    <scope>INTERACTION WITH SL1/MTERF3</scope>
    <source>
        <strain>cv. Columbia</strain>
    </source>
</reference>
<reference key="17">
    <citation type="journal article" date="2021" name="Nat. Commun.">
        <title>RCB initiates Arabidopsis thermomorphogenesis by stabilizing the thermoregulator PIF4 in the daytime.</title>
        <authorList>
            <person name="Qiu Y."/>
            <person name="Pasoreck E.K."/>
            <person name="Yoo C.Y."/>
            <person name="He J."/>
            <person name="Wang H."/>
            <person name="Bajracharya A."/>
            <person name="Li M."/>
            <person name="Larsen H.D."/>
            <person name="Cheung S."/>
            <person name="Chen M."/>
        </authorList>
    </citation>
    <scope>FUNCTION</scope>
    <scope>DISRUPTION PHENOTYPE</scope>
    <scope>INTERACTION WITH MRL7/RCB</scope>
    <source>
        <strain>cv. Columbia</strain>
    </source>
</reference>
<reference key="18">
    <citation type="journal article" date="2022" name="Plant Physiol.">
        <title>PHYTOCHROME-INTERACTING FACTOR 4/HEMERA-mediated thermosensory growth requires the mediator subunit MED14.</title>
        <authorList>
            <person name="Bajracharya A."/>
            <person name="Xi J."/>
            <person name="Grace K.F."/>
            <person name="Bayer E.E."/>
            <person name="Grant C.A."/>
            <person name="Clutton C.H."/>
            <person name="Baerson S.R."/>
            <person name="Agarwal A.K."/>
            <person name="Qiu Y."/>
        </authorList>
    </citation>
    <scope>FUNCTION</scope>
    <scope>DISRUPTION PHENOTYPE</scope>
    <scope>INTERACTION WITH MED14</scope>
    <source>
        <strain>cv. Columbia</strain>
    </source>
</reference>
<evidence type="ECO:0000255" key="1"/>
<evidence type="ECO:0000255" key="2">
    <source>
        <dbReference type="PROSITE-ProRule" id="PRU00768"/>
    </source>
</evidence>
<evidence type="ECO:0000256" key="3">
    <source>
        <dbReference type="SAM" id="MobiDB-lite"/>
    </source>
</evidence>
<evidence type="ECO:0000269" key="4">
    <source>
    </source>
</evidence>
<evidence type="ECO:0000269" key="5">
    <source>
    </source>
</evidence>
<evidence type="ECO:0000269" key="6">
    <source>
    </source>
</evidence>
<evidence type="ECO:0000269" key="7">
    <source>
    </source>
</evidence>
<evidence type="ECO:0000269" key="8">
    <source>
    </source>
</evidence>
<evidence type="ECO:0000269" key="9">
    <source>
    </source>
</evidence>
<evidence type="ECO:0000269" key="10">
    <source>
    </source>
</evidence>
<evidence type="ECO:0000269" key="11">
    <source>
    </source>
</evidence>
<evidence type="ECO:0000269" key="12">
    <source>
    </source>
</evidence>
<evidence type="ECO:0000269" key="13">
    <source>
    </source>
</evidence>
<evidence type="ECO:0000269" key="14">
    <source>
    </source>
</evidence>
<evidence type="ECO:0000269" key="15">
    <source>
    </source>
</evidence>
<evidence type="ECO:0000269" key="16">
    <source>
    </source>
</evidence>
<evidence type="ECO:0000269" key="17">
    <source>
    </source>
</evidence>
<evidence type="ECO:0000303" key="18">
    <source>
    </source>
</evidence>
<evidence type="ECO:0000303" key="19">
    <source>
    </source>
</evidence>
<evidence type="ECO:0000303" key="20">
    <source>
    </source>
</evidence>
<evidence type="ECO:0000303" key="21">
    <source>
    </source>
</evidence>
<evidence type="ECO:0000305" key="22"/>
<evidence type="ECO:0000312" key="23">
    <source>
        <dbReference type="Araport" id="AT2G34640"/>
    </source>
</evidence>
<evidence type="ECO:0000312" key="24">
    <source>
        <dbReference type="EMBL" id="AAC26686.1"/>
    </source>
</evidence>
<proteinExistence type="evidence at protein level"/>
<organism>
    <name type="scientific">Arabidopsis thaliana</name>
    <name type="common">Mouse-ear cress</name>
    <dbReference type="NCBI Taxonomy" id="3702"/>
    <lineage>
        <taxon>Eukaryota</taxon>
        <taxon>Viridiplantae</taxon>
        <taxon>Streptophyta</taxon>
        <taxon>Embryophyta</taxon>
        <taxon>Tracheophyta</taxon>
        <taxon>Spermatophyta</taxon>
        <taxon>Magnoliopsida</taxon>
        <taxon>eudicotyledons</taxon>
        <taxon>Gunneridae</taxon>
        <taxon>Pentapetalae</taxon>
        <taxon>rosids</taxon>
        <taxon>malvids</taxon>
        <taxon>Brassicales</taxon>
        <taxon>Brassicaceae</taxon>
        <taxon>Camelineae</taxon>
        <taxon>Arabidopsis</taxon>
    </lineage>
</organism>
<comment type="function">
    <text evidence="4 5 8 10 11 12 16 17">Involved in plastid gene expression (PubMed:16326926). Acidic transcriptional coactivator necessary for the transactivation of many PIFs target genes (class B genes), particularly during the regulation of hypocotyl growth (PubMed:25944101). Plays dual opposite roles in regulating hypocotyl growth, preventing it in red and far-red conditions, but promoting it otherwise (PubMed:25944101). Required in the nucleus for the initiation of photomorphogenesis mediated by phytochromes (PHYs) (e.g. PHYA and PHYB) by mediating PHYs localization to photobodies, especially in response to red and far-red light, and implicating phytochrome nuclear bodies as sites of proteolysis for PHYs and PIFs proteins (e.g. PIF1 and PIF3) (PubMed:20603003, PubMed:22895253, PubMed:25944101). Acts downstream of PHYs and upstream of DET1 (PubMed:20603003, PubMed:22895253). Involved in UV tolerance in both roots and hypocotyls, specifically in dark conditions (PubMed:29283431). Element of a PIF4/HMR/MED14-dependent thermoresponsive process; acts as a PIF4 transcriptional coactivator to trigger the thermoresponsive growth-relevant genes (e.g. mainly involved in biosynthesis and signaling of the phytohormone auxin) and promote warm-temperature-dependent (e.g. 27 degrees Celsius) PIF4 and MED14 stabilization and accumulation, being more prominently involved in long days (LD) and continuous red light (Rc) than in short days (SD), thus modulating warm temperature elicitation of MED14-dependent thermomorphogenesis (e.g. hypocotyl elongation) (PubMed:30635559, PubMed:33824329, PubMed:36063057).</text>
</comment>
<comment type="subunit">
    <text evidence="6 7 8 9 10 11 12 13 15 16 17">Component of the transcriptionally active chromosome (TAC) complexes (PubMed:21949211, PubMed:22010110). Interacts with PTAC14 and PTAC7 (PubMed:22010110, PubMed:23082802). Binds directly to PTAC6/PAP8 in the nucleus (PubMed:33001465). Interacts with MED14 (PubMed:36063057). Binds to SL1/MTERF3 (PubMed:33391315). Binds to photoactivated phytochromes (e.g. PHYA and PHYB) via their photosensory domains; these interactions stimulate its light-mediated accumulation (PubMed:22895253). Associates, via its N-terminal region, with phytochrome-interacting factors (PIFs) including PIF1, PIF3, PIF4, PIF5, PIF6, BHLH72/PIF7, UNE10/PIF8 and PIL1 (PubMed:25944101, PubMed:30635559). Binds to RAD4 (PubMed:29283431). Associates with MRL7/RCB (PubMed:33824329).</text>
</comment>
<comment type="subcellular location">
    <subcellularLocation>
        <location evidence="4 5">Plastid</location>
        <location evidence="4 5">Chloroplast</location>
    </subcellularLocation>
    <subcellularLocation>
        <location evidence="5 8">Nucleus</location>
    </subcellularLocation>
    <text evidence="5">Localizes to subnuclear domains in the nucleolus and in the nucleoplasm, and in chloroplasts.</text>
</comment>
<comment type="tissue specificity">
    <text evidence="4 5">Mostly expressed in cotyledons, leaves, stems and flowers, but barely in roots.</text>
</comment>
<comment type="developmental stage">
    <text evidence="5">In young seedlings, expressed predominantly in cotyledons, at the top of the hypocotyl, and in the root tip, regardless of light conditions. In older seedlings, confined to unexpanded cotyledons of dark-grown seedlings.</text>
</comment>
<comment type="induction">
    <text evidence="5 8 14">Regulated by light at the post-translational level; constitutively expressed at transcript level, but accumulates in response to light (e.g. red, far red, blue and white light) at protein level (PubMed:20603003, PubMed:22895253). Induced by cytokinin (e.g. trans-zeatin) (PubMed:33322466).</text>
</comment>
<comment type="disruption phenotype">
    <text evidence="4 5 10 11 12 16 17">Seedling lethal without exogenous carbon sources (PubMed:16326926, PubMed:20603003). Decrease of total chlorophyll content as well as a decrease in the chlorophyll a:b ratio. Absence of grana thylakoids. Altered expression profiles of plastid genes (PubMed:16326926). Disturbed expression of many PIF target genes, associated with the accumulation of PIF1 and PIF3 failing to be degraded in the light, and leading to long hypocotyls (PubMed:25944101). Impaired in phytochrome (both PHYA and PHYB) responses, especially to red and far-red light, such as hypocotyl growth inhibition, proteolysis of phytochrome A and phytochrome-interacting transcription factors (PubMed:20603003). Increased UV sensitivity in both roots and hypocotyls, specifically in dark conditions (PubMed:29283431). In hmr-22, reduced responses to warm temperature (e.g. 27 degrees Celsius), including thermoresponsive growth-relevant genes expression and hypocotyl growth, and associated with reduced stabilization and accumulation of PIF4, mainly in long days (LD) and continuous red light (Rc), but also, to a lower extent, in short days (SD); this phenotypes are reversed in the rcb-101 mutant (PubMed:30635559, PubMed:33824329, PubMed:36063057).</text>
</comment>
<comment type="sequence caution" evidence="22">
    <conflict type="erroneous gene model prediction">
        <sequence resource="EMBL-CDS" id="AAC26686"/>
    </conflict>
</comment>